<organism>
    <name type="scientific">Clostridium beijerinckii (strain ATCC 51743 / NCIMB 8052)</name>
    <name type="common">Clostridium acetobutylicum</name>
    <dbReference type="NCBI Taxonomy" id="290402"/>
    <lineage>
        <taxon>Bacteria</taxon>
        <taxon>Bacillati</taxon>
        <taxon>Bacillota</taxon>
        <taxon>Clostridia</taxon>
        <taxon>Eubacteriales</taxon>
        <taxon>Clostridiaceae</taxon>
        <taxon>Clostridium</taxon>
    </lineage>
</organism>
<keyword id="KW-0328">Glycosyltransferase</keyword>
<keyword id="KW-0460">Magnesium</keyword>
<keyword id="KW-0665">Pyrimidine biosynthesis</keyword>
<keyword id="KW-0808">Transferase</keyword>
<accession>A6LS60</accession>
<comment type="function">
    <text evidence="1">Catalyzes the transfer of a ribosyl phosphate group from 5-phosphoribose 1-diphosphate to orotate, leading to the formation of orotidine monophosphate (OMP).</text>
</comment>
<comment type="catalytic activity">
    <reaction evidence="1">
        <text>orotidine 5'-phosphate + diphosphate = orotate + 5-phospho-alpha-D-ribose 1-diphosphate</text>
        <dbReference type="Rhea" id="RHEA:10380"/>
        <dbReference type="ChEBI" id="CHEBI:30839"/>
        <dbReference type="ChEBI" id="CHEBI:33019"/>
        <dbReference type="ChEBI" id="CHEBI:57538"/>
        <dbReference type="ChEBI" id="CHEBI:58017"/>
        <dbReference type="EC" id="2.4.2.10"/>
    </reaction>
</comment>
<comment type="cofactor">
    <cofactor evidence="1">
        <name>Mg(2+)</name>
        <dbReference type="ChEBI" id="CHEBI:18420"/>
    </cofactor>
</comment>
<comment type="pathway">
    <text evidence="1">Pyrimidine metabolism; UMP biosynthesis via de novo pathway; UMP from orotate: step 1/2.</text>
</comment>
<comment type="subunit">
    <text evidence="1">Homodimer.</text>
</comment>
<comment type="similarity">
    <text evidence="1">Belongs to the purine/pyrimidine phosphoribosyltransferase family. PyrE subfamily.</text>
</comment>
<feature type="chain" id="PRO_1000085542" description="Orotate phosphoribosyltransferase">
    <location>
        <begin position="1"/>
        <end position="224"/>
    </location>
</feature>
<feature type="binding site" description="in other chain" evidence="1">
    <location>
        <position position="26"/>
    </location>
    <ligand>
        <name>5-phospho-alpha-D-ribose 1-diphosphate</name>
        <dbReference type="ChEBI" id="CHEBI:58017"/>
        <note>ligand shared between dimeric partners</note>
    </ligand>
</feature>
<feature type="binding site" description="in other chain" evidence="1">
    <location>
        <begin position="73"/>
        <end position="74"/>
    </location>
    <ligand>
        <name>5-phospho-alpha-D-ribose 1-diphosphate</name>
        <dbReference type="ChEBI" id="CHEBI:58017"/>
        <note>ligand shared between dimeric partners</note>
    </ligand>
</feature>
<feature type="binding site" evidence="1">
    <location>
        <position position="100"/>
    </location>
    <ligand>
        <name>5-phospho-alpha-D-ribose 1-diphosphate</name>
        <dbReference type="ChEBI" id="CHEBI:58017"/>
        <note>ligand shared between dimeric partners</note>
    </ligand>
</feature>
<feature type="binding site" description="in other chain" evidence="1">
    <location>
        <position position="101"/>
    </location>
    <ligand>
        <name>5-phospho-alpha-D-ribose 1-diphosphate</name>
        <dbReference type="ChEBI" id="CHEBI:58017"/>
        <note>ligand shared between dimeric partners</note>
    </ligand>
</feature>
<feature type="binding site" evidence="1">
    <location>
        <position position="104"/>
    </location>
    <ligand>
        <name>5-phospho-alpha-D-ribose 1-diphosphate</name>
        <dbReference type="ChEBI" id="CHEBI:58017"/>
        <note>ligand shared between dimeric partners</note>
    </ligand>
</feature>
<feature type="binding site" evidence="1">
    <location>
        <position position="106"/>
    </location>
    <ligand>
        <name>5-phospho-alpha-D-ribose 1-diphosphate</name>
        <dbReference type="ChEBI" id="CHEBI:58017"/>
        <note>ligand shared between dimeric partners</note>
    </ligand>
</feature>
<feature type="binding site" description="in other chain" evidence="1">
    <location>
        <begin position="127"/>
        <end position="135"/>
    </location>
    <ligand>
        <name>5-phospho-alpha-D-ribose 1-diphosphate</name>
        <dbReference type="ChEBI" id="CHEBI:58017"/>
        <note>ligand shared between dimeric partners</note>
    </ligand>
</feature>
<feature type="binding site" evidence="1">
    <location>
        <position position="131"/>
    </location>
    <ligand>
        <name>orotate</name>
        <dbReference type="ChEBI" id="CHEBI:30839"/>
    </ligand>
</feature>
<feature type="binding site" evidence="1">
    <location>
        <position position="160"/>
    </location>
    <ligand>
        <name>orotate</name>
        <dbReference type="ChEBI" id="CHEBI:30839"/>
    </ligand>
</feature>
<gene>
    <name evidence="1" type="primary">pyrE</name>
    <name type="ordered locus">Cbei_1006</name>
</gene>
<protein>
    <recommendedName>
        <fullName evidence="1">Orotate phosphoribosyltransferase</fullName>
        <shortName evidence="1">OPRT</shortName>
        <shortName evidence="1">OPRTase</shortName>
        <ecNumber evidence="1">2.4.2.10</ecNumber>
    </recommendedName>
</protein>
<sequence>MKAYKKEFINFMIECGVLTFGDFVTKSGRKTPFFVNTGNYQTGSQLRRLGEFYAEAIKENFADDYDVLFGPAYKGIPLSVTTSIALSSSFDIDVRYCSNRKEVKDHGDTGILLGSKLNDGDKVLIVEDVTTAGTSIYETMPILKSQADVNVKGLIISVDRMERGQGEQSALTEIREKFGFKTCAIVTMAEVIEYLYNKEINGTILITDEVKGRIDEYYKQYGAK</sequence>
<proteinExistence type="inferred from homology"/>
<reference key="1">
    <citation type="submission" date="2007-06" db="EMBL/GenBank/DDBJ databases">
        <title>Complete sequence of Clostridium beijerinckii NCIMB 8052.</title>
        <authorList>
            <consortium name="US DOE Joint Genome Institute"/>
            <person name="Copeland A."/>
            <person name="Lucas S."/>
            <person name="Lapidus A."/>
            <person name="Barry K."/>
            <person name="Detter J.C."/>
            <person name="Glavina del Rio T."/>
            <person name="Hammon N."/>
            <person name="Israni S."/>
            <person name="Dalin E."/>
            <person name="Tice H."/>
            <person name="Pitluck S."/>
            <person name="Sims D."/>
            <person name="Brettin T."/>
            <person name="Bruce D."/>
            <person name="Tapia R."/>
            <person name="Brainard J."/>
            <person name="Schmutz J."/>
            <person name="Larimer F."/>
            <person name="Land M."/>
            <person name="Hauser L."/>
            <person name="Kyrpides N."/>
            <person name="Mikhailova N."/>
            <person name="Bennet G."/>
            <person name="Cann I."/>
            <person name="Chen J.-S."/>
            <person name="Contreras A.L."/>
            <person name="Jones D."/>
            <person name="Kashket E."/>
            <person name="Mitchell W."/>
            <person name="Stoddard S."/>
            <person name="Schwarz W."/>
            <person name="Qureshi N."/>
            <person name="Young M."/>
            <person name="Shi Z."/>
            <person name="Ezeji T."/>
            <person name="White B."/>
            <person name="Blaschek H."/>
            <person name="Richardson P."/>
        </authorList>
    </citation>
    <scope>NUCLEOTIDE SEQUENCE [LARGE SCALE GENOMIC DNA]</scope>
    <source>
        <strain>ATCC 51743 / NCIMB 8052</strain>
    </source>
</reference>
<name>PYRE_CLOB8</name>
<dbReference type="EC" id="2.4.2.10" evidence="1"/>
<dbReference type="EMBL" id="CP000721">
    <property type="protein sequence ID" value="ABR33190.1"/>
    <property type="molecule type" value="Genomic_DNA"/>
</dbReference>
<dbReference type="RefSeq" id="WP_011968349.1">
    <property type="nucleotide sequence ID" value="NC_009617.1"/>
</dbReference>
<dbReference type="SMR" id="A6LS60"/>
<dbReference type="GeneID" id="66343939"/>
<dbReference type="KEGG" id="cbe:Cbei_1006"/>
<dbReference type="eggNOG" id="COG0461">
    <property type="taxonomic scope" value="Bacteria"/>
</dbReference>
<dbReference type="HOGENOM" id="CLU_074878_0_1_9"/>
<dbReference type="UniPathway" id="UPA00070">
    <property type="reaction ID" value="UER00119"/>
</dbReference>
<dbReference type="Proteomes" id="UP000000565">
    <property type="component" value="Chromosome"/>
</dbReference>
<dbReference type="GO" id="GO:0005737">
    <property type="term" value="C:cytoplasm"/>
    <property type="evidence" value="ECO:0007669"/>
    <property type="project" value="TreeGrafter"/>
</dbReference>
<dbReference type="GO" id="GO:0000287">
    <property type="term" value="F:magnesium ion binding"/>
    <property type="evidence" value="ECO:0007669"/>
    <property type="project" value="UniProtKB-UniRule"/>
</dbReference>
<dbReference type="GO" id="GO:0004588">
    <property type="term" value="F:orotate phosphoribosyltransferase activity"/>
    <property type="evidence" value="ECO:0007669"/>
    <property type="project" value="UniProtKB-UniRule"/>
</dbReference>
<dbReference type="GO" id="GO:0006207">
    <property type="term" value="P:'de novo' pyrimidine nucleobase biosynthetic process"/>
    <property type="evidence" value="ECO:0007669"/>
    <property type="project" value="TreeGrafter"/>
</dbReference>
<dbReference type="GO" id="GO:0044205">
    <property type="term" value="P:'de novo' UMP biosynthetic process"/>
    <property type="evidence" value="ECO:0007669"/>
    <property type="project" value="UniProtKB-UniRule"/>
</dbReference>
<dbReference type="GO" id="GO:0046132">
    <property type="term" value="P:pyrimidine ribonucleoside biosynthetic process"/>
    <property type="evidence" value="ECO:0007669"/>
    <property type="project" value="TreeGrafter"/>
</dbReference>
<dbReference type="CDD" id="cd06223">
    <property type="entry name" value="PRTases_typeI"/>
    <property type="match status" value="1"/>
</dbReference>
<dbReference type="Gene3D" id="3.40.50.2020">
    <property type="match status" value="1"/>
</dbReference>
<dbReference type="HAMAP" id="MF_01208">
    <property type="entry name" value="PyrE"/>
    <property type="match status" value="1"/>
</dbReference>
<dbReference type="InterPro" id="IPR023031">
    <property type="entry name" value="OPRT"/>
</dbReference>
<dbReference type="InterPro" id="IPR004467">
    <property type="entry name" value="Or_phspho_trans_dom"/>
</dbReference>
<dbReference type="InterPro" id="IPR000836">
    <property type="entry name" value="PRibTrfase_dom"/>
</dbReference>
<dbReference type="InterPro" id="IPR029057">
    <property type="entry name" value="PRTase-like"/>
</dbReference>
<dbReference type="NCBIfam" id="TIGR00336">
    <property type="entry name" value="pyrE"/>
    <property type="match status" value="1"/>
</dbReference>
<dbReference type="PANTHER" id="PTHR46683">
    <property type="entry name" value="OROTATE PHOSPHORIBOSYLTRANSFERASE 1-RELATED"/>
    <property type="match status" value="1"/>
</dbReference>
<dbReference type="PANTHER" id="PTHR46683:SF1">
    <property type="entry name" value="OROTATE PHOSPHORIBOSYLTRANSFERASE 1-RELATED"/>
    <property type="match status" value="1"/>
</dbReference>
<dbReference type="Pfam" id="PF00156">
    <property type="entry name" value="Pribosyltran"/>
    <property type="match status" value="1"/>
</dbReference>
<dbReference type="SUPFAM" id="SSF53271">
    <property type="entry name" value="PRTase-like"/>
    <property type="match status" value="1"/>
</dbReference>
<evidence type="ECO:0000255" key="1">
    <source>
        <dbReference type="HAMAP-Rule" id="MF_01208"/>
    </source>
</evidence>